<accession>A6TCF3</accession>
<gene>
    <name type="primary">trmJ</name>
    <name type="ordered locus">KPN78578_28130</name>
    <name type="ORF">KPN_02864</name>
</gene>
<comment type="function">
    <text evidence="1">Catalyzes the formation of 2'O-methylated cytidine (Cm32) or 2'O-methylated uridine (Um32) at position 32 in tRNA.</text>
</comment>
<comment type="catalytic activity">
    <reaction evidence="1">
        <text>cytidine(32) in tRNA + S-adenosyl-L-methionine = 2'-O-methylcytidine(32) in tRNA + S-adenosyl-L-homocysteine + H(+)</text>
        <dbReference type="Rhea" id="RHEA:42932"/>
        <dbReference type="Rhea" id="RHEA-COMP:10288"/>
        <dbReference type="Rhea" id="RHEA-COMP:10289"/>
        <dbReference type="ChEBI" id="CHEBI:15378"/>
        <dbReference type="ChEBI" id="CHEBI:57856"/>
        <dbReference type="ChEBI" id="CHEBI:59789"/>
        <dbReference type="ChEBI" id="CHEBI:74495"/>
        <dbReference type="ChEBI" id="CHEBI:82748"/>
        <dbReference type="EC" id="2.1.1.200"/>
    </reaction>
</comment>
<comment type="catalytic activity">
    <reaction evidence="1">
        <text>uridine(32) in tRNA + S-adenosyl-L-methionine = 2'-O-methyluridine(32) in tRNA + S-adenosyl-L-homocysteine + H(+)</text>
        <dbReference type="Rhea" id="RHEA:42936"/>
        <dbReference type="Rhea" id="RHEA-COMP:10107"/>
        <dbReference type="Rhea" id="RHEA-COMP:10290"/>
        <dbReference type="ChEBI" id="CHEBI:15378"/>
        <dbReference type="ChEBI" id="CHEBI:57856"/>
        <dbReference type="ChEBI" id="CHEBI:59789"/>
        <dbReference type="ChEBI" id="CHEBI:65315"/>
        <dbReference type="ChEBI" id="CHEBI:74478"/>
        <dbReference type="EC" id="2.1.1.200"/>
    </reaction>
</comment>
<comment type="subunit">
    <text evidence="1">Homodimer.</text>
</comment>
<comment type="subcellular location">
    <subcellularLocation>
        <location evidence="1">Cytoplasm</location>
    </subcellularLocation>
</comment>
<comment type="similarity">
    <text evidence="2">Belongs to the class IV-like SAM-binding methyltransferase superfamily. RNA methyltransferase TrmH family.</text>
</comment>
<dbReference type="EC" id="2.1.1.200" evidence="1"/>
<dbReference type="EMBL" id="CP000647">
    <property type="protein sequence ID" value="ABR78274.1"/>
    <property type="molecule type" value="Genomic_DNA"/>
</dbReference>
<dbReference type="RefSeq" id="WP_002913994.1">
    <property type="nucleotide sequence ID" value="NC_009648.1"/>
</dbReference>
<dbReference type="SMR" id="A6TCF3"/>
<dbReference type="STRING" id="272620.KPN_02864"/>
<dbReference type="PaxDb" id="272620-KPN_02864"/>
<dbReference type="DNASU" id="5342773"/>
<dbReference type="EnsemblBacteria" id="ABR78274">
    <property type="protein sequence ID" value="ABR78274"/>
    <property type="gene ID" value="KPN_02864"/>
</dbReference>
<dbReference type="KEGG" id="kpn:KPN_02864"/>
<dbReference type="HOGENOM" id="CLU_056931_0_1_6"/>
<dbReference type="Proteomes" id="UP000000265">
    <property type="component" value="Chromosome"/>
</dbReference>
<dbReference type="GO" id="GO:0005829">
    <property type="term" value="C:cytosol"/>
    <property type="evidence" value="ECO:0007669"/>
    <property type="project" value="TreeGrafter"/>
</dbReference>
<dbReference type="GO" id="GO:0003723">
    <property type="term" value="F:RNA binding"/>
    <property type="evidence" value="ECO:0007669"/>
    <property type="project" value="InterPro"/>
</dbReference>
<dbReference type="GO" id="GO:0160206">
    <property type="term" value="F:tRNA (cytidine(32)/uridine(32)-2'-O)-methyltransferase activity"/>
    <property type="evidence" value="ECO:0007669"/>
    <property type="project" value="UniProtKB-EC"/>
</dbReference>
<dbReference type="GO" id="GO:0002128">
    <property type="term" value="P:tRNA nucleoside ribose methylation"/>
    <property type="evidence" value="ECO:0007669"/>
    <property type="project" value="TreeGrafter"/>
</dbReference>
<dbReference type="CDD" id="cd18093">
    <property type="entry name" value="SpoU-like_TrmJ"/>
    <property type="match status" value="1"/>
</dbReference>
<dbReference type="FunFam" id="1.10.8.590:FF:000001">
    <property type="entry name" value="tRNA:Cm32/Um32 methyltransferase"/>
    <property type="match status" value="1"/>
</dbReference>
<dbReference type="FunFam" id="3.40.1280.10:FF:000006">
    <property type="entry name" value="Uncharacterized tRNA/rRNA methyltransferase HI_0380"/>
    <property type="match status" value="1"/>
</dbReference>
<dbReference type="Gene3D" id="1.10.8.590">
    <property type="match status" value="1"/>
</dbReference>
<dbReference type="Gene3D" id="3.40.1280.10">
    <property type="match status" value="1"/>
</dbReference>
<dbReference type="InterPro" id="IPR029028">
    <property type="entry name" value="Alpha/beta_knot_MTases"/>
</dbReference>
<dbReference type="InterPro" id="IPR004384">
    <property type="entry name" value="RNA_MeTrfase_TrmJ/LasT"/>
</dbReference>
<dbReference type="InterPro" id="IPR001537">
    <property type="entry name" value="SpoU_MeTrfase"/>
</dbReference>
<dbReference type="InterPro" id="IPR029026">
    <property type="entry name" value="tRNA_m1G_MTases_N"/>
</dbReference>
<dbReference type="NCBIfam" id="NF011694">
    <property type="entry name" value="PRK15114.1"/>
    <property type="match status" value="1"/>
</dbReference>
<dbReference type="NCBIfam" id="TIGR00050">
    <property type="entry name" value="rRNA_methyl_1"/>
    <property type="match status" value="1"/>
</dbReference>
<dbReference type="PANTHER" id="PTHR42786:SF2">
    <property type="entry name" value="TRNA (CYTIDINE_URIDINE-2'-O-)-METHYLTRANSFERASE TRMJ"/>
    <property type="match status" value="1"/>
</dbReference>
<dbReference type="PANTHER" id="PTHR42786">
    <property type="entry name" value="TRNA/RRNA METHYLTRANSFERASE"/>
    <property type="match status" value="1"/>
</dbReference>
<dbReference type="Pfam" id="PF00588">
    <property type="entry name" value="SpoU_methylase"/>
    <property type="match status" value="1"/>
</dbReference>
<dbReference type="PIRSF" id="PIRSF004808">
    <property type="entry name" value="LasT"/>
    <property type="match status" value="1"/>
</dbReference>
<dbReference type="SUPFAM" id="SSF75217">
    <property type="entry name" value="alpha/beta knot"/>
    <property type="match status" value="1"/>
</dbReference>
<evidence type="ECO:0000250" key="1">
    <source>
        <dbReference type="UniProtKB" id="P0AE01"/>
    </source>
</evidence>
<evidence type="ECO:0000305" key="2"/>
<feature type="chain" id="PRO_0000313857" description="tRNA (cytidine/uridine-2'-O-)-methyltransferase TrmJ">
    <location>
        <begin position="1"/>
        <end position="244"/>
    </location>
</feature>
<feature type="binding site" evidence="1">
    <location>
        <begin position="79"/>
        <end position="81"/>
    </location>
    <ligand>
        <name>S-adenosyl-L-methionine</name>
        <dbReference type="ChEBI" id="CHEBI:59789"/>
    </ligand>
</feature>
<feature type="binding site" evidence="1">
    <location>
        <position position="114"/>
    </location>
    <ligand>
        <name>S-adenosyl-L-methionine</name>
        <dbReference type="ChEBI" id="CHEBI:59789"/>
    </ligand>
</feature>
<feature type="binding site" evidence="1">
    <location>
        <position position="134"/>
    </location>
    <ligand>
        <name>S-adenosyl-L-methionine</name>
        <dbReference type="ChEBI" id="CHEBI:59789"/>
    </ligand>
</feature>
<feature type="binding site" evidence="1">
    <location>
        <begin position="141"/>
        <end position="143"/>
    </location>
    <ligand>
        <name>S-adenosyl-L-methionine</name>
        <dbReference type="ChEBI" id="CHEBI:59789"/>
    </ligand>
</feature>
<reference key="1">
    <citation type="submission" date="2006-09" db="EMBL/GenBank/DDBJ databases">
        <authorList>
            <consortium name="The Klebsiella pneumonia Genome Sequencing Project"/>
            <person name="McClelland M."/>
            <person name="Sanderson E.K."/>
            <person name="Spieth J."/>
            <person name="Clifton W.S."/>
            <person name="Latreille P."/>
            <person name="Sabo A."/>
            <person name="Pepin K."/>
            <person name="Bhonagiri V."/>
            <person name="Porwollik S."/>
            <person name="Ali J."/>
            <person name="Wilson R.K."/>
        </authorList>
    </citation>
    <scope>NUCLEOTIDE SEQUENCE [LARGE SCALE GENOMIC DNA]</scope>
    <source>
        <strain>ATCC 700721 / MGH 78578</strain>
    </source>
</reference>
<name>TRMJ_KLEP7</name>
<sequence length="244" mass="26798">MLQNIRIVLVETSHTGNMGSVARAMKTMGLTNLWLVNPLVKPDSQAIALAAGASDVIGNAQIVDTLDEALAGCSLVVGTSARSRTLPWPMLDPRECGLKSVAEGQHAPVALVFGRERVGLTNDELQKCHYHVAIAANPEYSSLNLAMAVQVIAYEVRMAWLAAQEQAQPAVEHEEAPYPLVDDLERFYDHLEQTLLATGFIRPNHPGQVMNKLRRLFTRARPESQELNILRGMLASIEQQNKGK</sequence>
<keyword id="KW-0963">Cytoplasm</keyword>
<keyword id="KW-0489">Methyltransferase</keyword>
<keyword id="KW-0949">S-adenosyl-L-methionine</keyword>
<keyword id="KW-0808">Transferase</keyword>
<keyword id="KW-0819">tRNA processing</keyword>
<organism>
    <name type="scientific">Klebsiella pneumoniae subsp. pneumoniae (strain ATCC 700721 / MGH 78578)</name>
    <dbReference type="NCBI Taxonomy" id="272620"/>
    <lineage>
        <taxon>Bacteria</taxon>
        <taxon>Pseudomonadati</taxon>
        <taxon>Pseudomonadota</taxon>
        <taxon>Gammaproteobacteria</taxon>
        <taxon>Enterobacterales</taxon>
        <taxon>Enterobacteriaceae</taxon>
        <taxon>Klebsiella/Raoultella group</taxon>
        <taxon>Klebsiella</taxon>
        <taxon>Klebsiella pneumoniae complex</taxon>
    </lineage>
</organism>
<protein>
    <recommendedName>
        <fullName evidence="1">tRNA (cytidine/uridine-2'-O-)-methyltransferase TrmJ</fullName>
        <ecNumber evidence="1">2.1.1.200</ecNumber>
    </recommendedName>
    <alternativeName>
        <fullName evidence="1">tRNA (cytidine(32)/uridine(32)-2'-O)-methyltransferase</fullName>
    </alternativeName>
    <alternativeName>
        <fullName evidence="1">tRNA Cm32/Um32 methyltransferase</fullName>
    </alternativeName>
</protein>
<proteinExistence type="inferred from homology"/>